<reference key="1">
    <citation type="journal article" date="2012" name="J. Proteome Res.">
        <title>Venomic and transcriptomic analysis of centipede Scolopendra subspinipes dehaani.</title>
        <authorList>
            <person name="Liu Z.C."/>
            <person name="Zhang R."/>
            <person name="Zhao F."/>
            <person name="Chen Z.M."/>
            <person name="Liu H.W."/>
            <person name="Wang Y.J."/>
            <person name="Jiang P."/>
            <person name="Zhang Y."/>
            <person name="Wu Y."/>
            <person name="Ding J.P."/>
            <person name="Lee W.H."/>
            <person name="Zhang Y."/>
        </authorList>
    </citation>
    <scope>NUCLEOTIDE SEQUENCE [MRNA]</scope>
    <scope>PROTEIN SEQUENCE OF 24-42</scope>
    <scope>SUBCELLULAR LOCATION</scope>
    <scope>MASS SPECTROMETRY</scope>
    <source>
        <tissue>Venom</tissue>
        <tissue>Venom gland</tissue>
    </source>
</reference>
<reference key="2">
    <citation type="journal article" date="2014" name="Mol. Biol. Evol.">
        <title>Clawing through evolution: toxin diversification and convergence in the ancient lineage Chilopoda (centipedes).</title>
        <authorList>
            <person name="Undheim E.A."/>
            <person name="Jones A."/>
            <person name="Clauser K.R."/>
            <person name="Holland J.W."/>
            <person name="Pineda S.S."/>
            <person name="King G.F."/>
            <person name="Fry B.G."/>
        </authorList>
    </citation>
    <scope>NOMENCLATURE</scope>
</reference>
<evidence type="ECO:0000269" key="1">
    <source>
    </source>
</evidence>
<evidence type="ECO:0000303" key="2">
    <source>
    </source>
</evidence>
<evidence type="ECO:0000305" key="3"/>
<evidence type="ECO:0000305" key="4">
    <source>
    </source>
</evidence>
<evidence type="ECO:0000305" key="5">
    <source>
    </source>
</evidence>
<accession>P0DQE1</accession>
<organism>
    <name type="scientific">Scolopendra dehaani</name>
    <name type="common">Thai centipede</name>
    <name type="synonym">Scolopendra subspinipes dehaani</name>
    <dbReference type="NCBI Taxonomy" id="2609776"/>
    <lineage>
        <taxon>Eukaryota</taxon>
        <taxon>Metazoa</taxon>
        <taxon>Ecdysozoa</taxon>
        <taxon>Arthropoda</taxon>
        <taxon>Myriapoda</taxon>
        <taxon>Chilopoda</taxon>
        <taxon>Pleurostigmophora</taxon>
        <taxon>Scolopendromorpha</taxon>
        <taxon>Scolopendridae</taxon>
        <taxon>Scolopendra</taxon>
    </lineage>
</organism>
<feature type="signal peptide" evidence="1">
    <location>
        <begin position="1"/>
        <end position="23"/>
    </location>
</feature>
<feature type="chain" id="PRO_0000446805" description="U-scoloptoxin(16)-Ssd1a" evidence="3">
    <location>
        <begin position="24"/>
        <end position="109"/>
    </location>
</feature>
<name>TXG1A_SCODE</name>
<proteinExistence type="evidence at protein level"/>
<keyword id="KW-0903">Direct protein sequencing</keyword>
<keyword id="KW-1015">Disulfide bond</keyword>
<keyword id="KW-0964">Secreted</keyword>
<keyword id="KW-0732">Signal</keyword>
<keyword id="KW-0800">Toxin</keyword>
<sequence length="109" mass="11689">MTTSATVIIMVLCVGSLVIFSEGSIGFELVTPLPGKPDECPVEDGRTLAIGQTEQVPGQCEERTCIKMDDQLYFELAGCGISEAGPGCEMFESKAETYPECCTPEIKCN</sequence>
<protein>
    <recommendedName>
        <fullName evidence="5">U-scoloptoxin(16)-Ssd1a</fullName>
        <shortName evidence="5">U-SLPTX(16)-Ssd1a</shortName>
    </recommendedName>
    <alternativeName>
        <fullName evidence="2">Toxin SSD377</fullName>
    </alternativeName>
</protein>
<dbReference type="EMBL" id="KC144377">
    <property type="status" value="NOT_ANNOTATED_CDS"/>
    <property type="molecule type" value="mRNA"/>
</dbReference>
<dbReference type="SMR" id="P0DQE1"/>
<dbReference type="GO" id="GO:0005576">
    <property type="term" value="C:extracellular region"/>
    <property type="evidence" value="ECO:0007669"/>
    <property type="project" value="UniProtKB-SubCell"/>
</dbReference>
<dbReference type="GO" id="GO:0090729">
    <property type="term" value="F:toxin activity"/>
    <property type="evidence" value="ECO:0007669"/>
    <property type="project" value="UniProtKB-KW"/>
</dbReference>
<dbReference type="InterPro" id="IPR029277">
    <property type="entry name" value="SVWC_dom"/>
</dbReference>
<dbReference type="InterPro" id="IPR053308">
    <property type="entry name" value="Vago-like"/>
</dbReference>
<dbReference type="PANTHER" id="PTHR39957">
    <property type="entry name" value="AT09846P1-RELATED"/>
    <property type="match status" value="1"/>
</dbReference>
<dbReference type="PANTHER" id="PTHR39957:SF1">
    <property type="entry name" value="AT09846P1-RELATED"/>
    <property type="match status" value="1"/>
</dbReference>
<dbReference type="Pfam" id="PF15430">
    <property type="entry name" value="SVWC"/>
    <property type="match status" value="1"/>
</dbReference>
<dbReference type="SMART" id="SM01318">
    <property type="entry name" value="SVWC"/>
    <property type="match status" value="1"/>
</dbReference>
<comment type="subcellular location">
    <subcellularLocation>
        <location evidence="1">Secreted</location>
    </subcellularLocation>
</comment>
<comment type="tissue specificity">
    <text evidence="4">Expressed by the venom gland.</text>
</comment>
<comment type="PTM">
    <text evidence="3">Contains 4 disulfide bonds.</text>
</comment>
<comment type="mass spectrometry" mass="18644.6" method="MALDI" evidence="1"/>
<comment type="similarity">
    <text evidence="3">Belongs to the scoloptoxin-16 family.</text>
</comment>